<organism>
    <name type="scientific">Odontomachus monticola</name>
    <name type="common">Trap-jaw ant</name>
    <dbReference type="NCBI Taxonomy" id="613454"/>
    <lineage>
        <taxon>Eukaryota</taxon>
        <taxon>Metazoa</taxon>
        <taxon>Ecdysozoa</taxon>
        <taxon>Arthropoda</taxon>
        <taxon>Hexapoda</taxon>
        <taxon>Insecta</taxon>
        <taxon>Pterygota</taxon>
        <taxon>Neoptera</taxon>
        <taxon>Endopterygota</taxon>
        <taxon>Hymenoptera</taxon>
        <taxon>Apocrita</taxon>
        <taxon>Aculeata</taxon>
        <taxon>Formicoidea</taxon>
        <taxon>Formicidae</taxon>
        <taxon>Ponerinae</taxon>
        <taxon>Ponerini</taxon>
        <taxon>Odontomachus</taxon>
    </lineage>
</organism>
<evidence type="ECO:0000250" key="1">
    <source>
        <dbReference type="UniProtKB" id="A0A348G5W0"/>
    </source>
</evidence>
<evidence type="ECO:0000250" key="2">
    <source>
        <dbReference type="UniProtKB" id="A0A348G5W2"/>
    </source>
</evidence>
<evidence type="ECO:0000250" key="3">
    <source>
        <dbReference type="UniProtKB" id="A0A348G6I7"/>
    </source>
</evidence>
<evidence type="ECO:0000255" key="4"/>
<evidence type="ECO:0000269" key="5">
    <source>
    </source>
</evidence>
<evidence type="ECO:0000305" key="6"/>
<evidence type="ECO:0000305" key="7">
    <source>
    </source>
</evidence>
<evidence type="ECO:0000305" key="8">
    <source>
    </source>
</evidence>
<evidence type="ECO:0000312" key="9">
    <source>
        <dbReference type="EMBL" id="BBF98062.1"/>
    </source>
</evidence>
<reference key="1">
    <citation type="journal article" date="2017" name="Toxins">
        <title>Combined venom gland transcriptomic and venom peptidomic analysis of the predatory ant Odontomachus monticola.</title>
        <authorList>
            <person name="Kazuma K."/>
            <person name="Masuko K."/>
            <person name="Konno K."/>
            <person name="Inagaki H."/>
        </authorList>
    </citation>
    <scope>NUCLEOTIDE SEQUENCE [MRNA]</scope>
    <source>
        <tissue>Venom gland</tissue>
    </source>
</reference>
<reference key="2">
    <citation type="journal article" date="2019" name="Toxins">
        <title>Mass spectrometry analysis and biological characterization of the predatory ant Odontomachus monticola venom and venom sac components.</title>
        <authorList>
            <person name="Tani N."/>
            <person name="Kazuma K."/>
            <person name="Ohtsuka Y."/>
            <person name="Shigeri Y."/>
            <person name="Masuko K."/>
            <person name="Konno K."/>
            <person name="Inagaki H."/>
        </authorList>
    </citation>
    <scope>MASS SPECTROMETRY</scope>
    <scope>SUBUNIT</scope>
    <scope>SUBCELLULAR LOCATION</scope>
    <scope>DISULFIDE BOND</scope>
    <source>
        <tissue>Venom</tissue>
    </source>
</reference>
<proteinExistence type="evidence at protein level"/>
<comment type="function">
    <text evidence="1">This homodimer composed of two cationic amphipathic alpha-helical peptides has antimicrobial activities against E.coli, S.aureus (MIC=3.1 uM), and S.cerevisiae (MIC=3.1 uM). It also shows histamine-releasing activity (66.4% at 10 uM) and a weak hemolytic activity (10.5% at 50 uM).</text>
</comment>
<comment type="subunit">
    <text evidence="5">Homo- or heterodimer with PLP4 (AC A0A348G5W0); disulfide-linked.</text>
</comment>
<comment type="subcellular location">
    <subcellularLocation>
        <location evidence="5">Secreted</location>
    </subcellularLocation>
</comment>
<comment type="tissue specificity">
    <text evidence="7">Expressed by the venom gland.</text>
</comment>
<comment type="PTM">
    <text evidence="8">Truncated sequences of this peptide have also been found in the venom. It is possible they have been cleaved in the venom.</text>
</comment>
<comment type="mass spectrometry">
    <text>in reducing conditions, Monoisotopic mass.</text>
</comment>
<comment type="mass spectrometry">
    <text>Homodimer, Monoisotopic mass.</text>
</comment>
<comment type="mass spectrometry">
    <text>Heterodimer, Monoisotopic mass.</text>
</comment>
<comment type="similarity">
    <text evidence="6">Belongs to the formicidae venom precursor-01 superfamily.</text>
</comment>
<sequence>MKPSGLTLAFLVVFMMAIMYNSVQAEALADADAEAFAEAGVKELFGKAWGLVKKHLPKACGLMGYVKQ</sequence>
<keyword id="KW-0044">Antibiotic</keyword>
<keyword id="KW-0929">Antimicrobial</keyword>
<keyword id="KW-1015">Disulfide bond</keyword>
<keyword id="KW-0295">Fungicide</keyword>
<keyword id="KW-0964">Secreted</keyword>
<keyword id="KW-0732">Signal</keyword>
<dbReference type="EMBL" id="LC416796">
    <property type="protein sequence ID" value="BBF98062.1"/>
    <property type="molecule type" value="mRNA"/>
</dbReference>
<dbReference type="SMR" id="A0A348G6I9"/>
<dbReference type="GO" id="GO:0005576">
    <property type="term" value="C:extracellular region"/>
    <property type="evidence" value="ECO:0007669"/>
    <property type="project" value="UniProtKB-SubCell"/>
</dbReference>
<dbReference type="GO" id="GO:0042742">
    <property type="term" value="P:defense response to bacterium"/>
    <property type="evidence" value="ECO:0007669"/>
    <property type="project" value="UniProtKB-KW"/>
</dbReference>
<dbReference type="GO" id="GO:0050832">
    <property type="term" value="P:defense response to fungus"/>
    <property type="evidence" value="ECO:0007669"/>
    <property type="project" value="UniProtKB-KW"/>
</dbReference>
<dbReference type="GO" id="GO:0031640">
    <property type="term" value="P:killing of cells of another organism"/>
    <property type="evidence" value="ECO:0007669"/>
    <property type="project" value="UniProtKB-KW"/>
</dbReference>
<protein>
    <recommendedName>
        <fullName evidence="2">U-poneritoxin(01)-Om4b</fullName>
        <shortName evidence="2">U-PONTX(01)-Om4b</shortName>
    </recommendedName>
    <alternativeName>
        <fullName evidence="9">Pilosulin-like peptide 7</fullName>
        <shortName evidence="3">PLP7</shortName>
    </alternativeName>
    <alternativeName>
        <fullName evidence="6">Poneratoxin</fullName>
    </alternativeName>
</protein>
<accession>A0A348G6I9</accession>
<name>TX17A_ODOMO</name>
<feature type="signal peptide" evidence="4">
    <location>
        <begin position="1"/>
        <end position="25"/>
    </location>
</feature>
<feature type="propeptide" id="PRO_0000447075" evidence="6">
    <location>
        <begin position="26"/>
        <end position="39"/>
    </location>
</feature>
<feature type="peptide" id="PRO_5016855820" description="U-poneritoxin(01)-Om4b" evidence="5">
    <location>
        <begin position="40"/>
        <end position="68"/>
    </location>
</feature>
<feature type="disulfide bond" description="Interchain" evidence="5">
    <location>
        <position position="60"/>
    </location>
</feature>